<protein>
    <recommendedName>
        <fullName evidence="1">4-hydroxythreonine-4-phosphate dehydrogenase</fullName>
        <ecNumber evidence="1">1.1.1.262</ecNumber>
    </recommendedName>
    <alternativeName>
        <fullName evidence="1">4-(phosphohydroxy)-L-threonine dehydrogenase</fullName>
    </alternativeName>
</protein>
<sequence length="329" mass="35164">MVKTQRVVITPGEPAGIGPDLVVQLAQREWPVELVVCADATLLTDRAAMLGLPLTLRPYSPNSPAQPQTAGTLTLLPVALRESVTAGQLAIENGHYVVETLARACDGCLNGEFAALITGPVHKGVINDAGIPFTGHTEFFEERSQAKKVVMMLATEELRVALATTHLPLRDIADAITPALLHEVIAILHHDLRTKFGIAEPRILVCGLNPHAGEGGHMGTEEIDTIIPVLDELRAQGMILNGPLPADTLFQPKYLDNADAVLAMYHDQGLPVLKYQGFGRGVNITLGLPFIRTSVDHGTALELAGRGEADVGSFITALNLAIKMIVNTQ</sequence>
<evidence type="ECO:0000255" key="1">
    <source>
        <dbReference type="HAMAP-Rule" id="MF_00536"/>
    </source>
</evidence>
<feature type="chain" id="PRO_1000051514" description="4-hydroxythreonine-4-phosphate dehydrogenase">
    <location>
        <begin position="1"/>
        <end position="329"/>
    </location>
</feature>
<feature type="binding site" evidence="1">
    <location>
        <position position="136"/>
    </location>
    <ligand>
        <name>substrate</name>
    </ligand>
</feature>
<feature type="binding site" evidence="1">
    <location>
        <position position="137"/>
    </location>
    <ligand>
        <name>substrate</name>
    </ligand>
</feature>
<feature type="binding site" evidence="1">
    <location>
        <position position="166"/>
    </location>
    <ligand>
        <name>a divalent metal cation</name>
        <dbReference type="ChEBI" id="CHEBI:60240"/>
        <note>ligand shared between dimeric partners</note>
    </ligand>
</feature>
<feature type="binding site" evidence="1">
    <location>
        <position position="211"/>
    </location>
    <ligand>
        <name>a divalent metal cation</name>
        <dbReference type="ChEBI" id="CHEBI:60240"/>
        <note>ligand shared between dimeric partners</note>
    </ligand>
</feature>
<feature type="binding site" evidence="1">
    <location>
        <position position="266"/>
    </location>
    <ligand>
        <name>a divalent metal cation</name>
        <dbReference type="ChEBI" id="CHEBI:60240"/>
        <note>ligand shared between dimeric partners</note>
    </ligand>
</feature>
<feature type="binding site" evidence="1">
    <location>
        <position position="274"/>
    </location>
    <ligand>
        <name>substrate</name>
    </ligand>
</feature>
<feature type="binding site" evidence="1">
    <location>
        <position position="283"/>
    </location>
    <ligand>
        <name>substrate</name>
    </ligand>
</feature>
<feature type="binding site" evidence="1">
    <location>
        <position position="292"/>
    </location>
    <ligand>
        <name>substrate</name>
    </ligand>
</feature>
<gene>
    <name evidence="1" type="primary">pdxA</name>
    <name type="ordered locus">SBO_0041</name>
</gene>
<keyword id="KW-0170">Cobalt</keyword>
<keyword id="KW-0963">Cytoplasm</keyword>
<keyword id="KW-0460">Magnesium</keyword>
<keyword id="KW-0479">Metal-binding</keyword>
<keyword id="KW-0520">NAD</keyword>
<keyword id="KW-0521">NADP</keyword>
<keyword id="KW-0560">Oxidoreductase</keyword>
<keyword id="KW-0664">Pyridoxine biosynthesis</keyword>
<keyword id="KW-0862">Zinc</keyword>
<accession>Q326I1</accession>
<comment type="function">
    <text evidence="1">Catalyzes the NAD(P)-dependent oxidation of 4-(phosphooxy)-L-threonine (HTP) into 2-amino-3-oxo-4-(phosphooxy)butyric acid which spontaneously decarboxylates to form 3-amino-2-oxopropyl phosphate (AHAP).</text>
</comment>
<comment type="catalytic activity">
    <reaction evidence="1">
        <text>4-(phosphooxy)-L-threonine + NAD(+) = 3-amino-2-oxopropyl phosphate + CO2 + NADH</text>
        <dbReference type="Rhea" id="RHEA:32275"/>
        <dbReference type="ChEBI" id="CHEBI:16526"/>
        <dbReference type="ChEBI" id="CHEBI:57279"/>
        <dbReference type="ChEBI" id="CHEBI:57540"/>
        <dbReference type="ChEBI" id="CHEBI:57945"/>
        <dbReference type="ChEBI" id="CHEBI:58452"/>
        <dbReference type="EC" id="1.1.1.262"/>
    </reaction>
</comment>
<comment type="cofactor">
    <cofactor evidence="1">
        <name>Zn(2+)</name>
        <dbReference type="ChEBI" id="CHEBI:29105"/>
    </cofactor>
    <cofactor evidence="1">
        <name>Mg(2+)</name>
        <dbReference type="ChEBI" id="CHEBI:18420"/>
    </cofactor>
    <cofactor evidence="1">
        <name>Co(2+)</name>
        <dbReference type="ChEBI" id="CHEBI:48828"/>
    </cofactor>
    <text evidence="1">Binds 1 divalent metal cation per subunit. Can use ions such as Zn(2+), Mg(2+) or Co(2+).</text>
</comment>
<comment type="pathway">
    <text evidence="1">Cofactor biosynthesis; pyridoxine 5'-phosphate biosynthesis; pyridoxine 5'-phosphate from D-erythrose 4-phosphate: step 4/5.</text>
</comment>
<comment type="subunit">
    <text evidence="1">Homodimer.</text>
</comment>
<comment type="subcellular location">
    <subcellularLocation>
        <location evidence="1">Cytoplasm</location>
    </subcellularLocation>
</comment>
<comment type="miscellaneous">
    <text evidence="1">The active site is located at the dimer interface.</text>
</comment>
<comment type="similarity">
    <text evidence="1">Belongs to the PdxA family.</text>
</comment>
<name>PDXA_SHIBS</name>
<dbReference type="EC" id="1.1.1.262" evidence="1"/>
<dbReference type="EMBL" id="CP000036">
    <property type="protein sequence ID" value="ABB64777.1"/>
    <property type="molecule type" value="Genomic_DNA"/>
</dbReference>
<dbReference type="RefSeq" id="WP_000241243.1">
    <property type="nucleotide sequence ID" value="NC_007613.1"/>
</dbReference>
<dbReference type="SMR" id="Q326I1"/>
<dbReference type="KEGG" id="sbo:SBO_0041"/>
<dbReference type="HOGENOM" id="CLU_040168_1_0_6"/>
<dbReference type="UniPathway" id="UPA00244">
    <property type="reaction ID" value="UER00312"/>
</dbReference>
<dbReference type="Proteomes" id="UP000007067">
    <property type="component" value="Chromosome"/>
</dbReference>
<dbReference type="GO" id="GO:0005737">
    <property type="term" value="C:cytoplasm"/>
    <property type="evidence" value="ECO:0007669"/>
    <property type="project" value="UniProtKB-SubCell"/>
</dbReference>
<dbReference type="GO" id="GO:0050570">
    <property type="term" value="F:4-hydroxythreonine-4-phosphate dehydrogenase activity"/>
    <property type="evidence" value="ECO:0007669"/>
    <property type="project" value="UniProtKB-UniRule"/>
</dbReference>
<dbReference type="GO" id="GO:0050897">
    <property type="term" value="F:cobalt ion binding"/>
    <property type="evidence" value="ECO:0007669"/>
    <property type="project" value="UniProtKB-UniRule"/>
</dbReference>
<dbReference type="GO" id="GO:0000287">
    <property type="term" value="F:magnesium ion binding"/>
    <property type="evidence" value="ECO:0007669"/>
    <property type="project" value="UniProtKB-UniRule"/>
</dbReference>
<dbReference type="GO" id="GO:0051287">
    <property type="term" value="F:NAD binding"/>
    <property type="evidence" value="ECO:0007669"/>
    <property type="project" value="InterPro"/>
</dbReference>
<dbReference type="GO" id="GO:0008270">
    <property type="term" value="F:zinc ion binding"/>
    <property type="evidence" value="ECO:0007669"/>
    <property type="project" value="UniProtKB-UniRule"/>
</dbReference>
<dbReference type="GO" id="GO:0042823">
    <property type="term" value="P:pyridoxal phosphate biosynthetic process"/>
    <property type="evidence" value="ECO:0007669"/>
    <property type="project" value="UniProtKB-UniRule"/>
</dbReference>
<dbReference type="GO" id="GO:0008615">
    <property type="term" value="P:pyridoxine biosynthetic process"/>
    <property type="evidence" value="ECO:0007669"/>
    <property type="project" value="UniProtKB-UniRule"/>
</dbReference>
<dbReference type="FunFam" id="3.40.718.10:FF:000010">
    <property type="entry name" value="4-hydroxythreonine-4-phosphate dehydrogenase"/>
    <property type="match status" value="1"/>
</dbReference>
<dbReference type="Gene3D" id="3.40.718.10">
    <property type="entry name" value="Isopropylmalate Dehydrogenase"/>
    <property type="match status" value="1"/>
</dbReference>
<dbReference type="HAMAP" id="MF_00536">
    <property type="entry name" value="PdxA"/>
    <property type="match status" value="1"/>
</dbReference>
<dbReference type="InterPro" id="IPR037510">
    <property type="entry name" value="PdxA"/>
</dbReference>
<dbReference type="InterPro" id="IPR005255">
    <property type="entry name" value="PdxA_fam"/>
</dbReference>
<dbReference type="NCBIfam" id="TIGR00557">
    <property type="entry name" value="pdxA"/>
    <property type="match status" value="1"/>
</dbReference>
<dbReference type="PANTHER" id="PTHR30004">
    <property type="entry name" value="4-HYDROXYTHREONINE-4-PHOSPHATE DEHYDROGENASE"/>
    <property type="match status" value="1"/>
</dbReference>
<dbReference type="PANTHER" id="PTHR30004:SF5">
    <property type="entry name" value="4-HYDROXYTHREONINE-4-PHOSPHATE DEHYDROGENASE"/>
    <property type="match status" value="1"/>
</dbReference>
<dbReference type="Pfam" id="PF04166">
    <property type="entry name" value="PdxA"/>
    <property type="match status" value="1"/>
</dbReference>
<dbReference type="SUPFAM" id="SSF53659">
    <property type="entry name" value="Isocitrate/Isopropylmalate dehydrogenase-like"/>
    <property type="match status" value="1"/>
</dbReference>
<proteinExistence type="inferred from homology"/>
<organism>
    <name type="scientific">Shigella boydii serotype 4 (strain Sb227)</name>
    <dbReference type="NCBI Taxonomy" id="300268"/>
    <lineage>
        <taxon>Bacteria</taxon>
        <taxon>Pseudomonadati</taxon>
        <taxon>Pseudomonadota</taxon>
        <taxon>Gammaproteobacteria</taxon>
        <taxon>Enterobacterales</taxon>
        <taxon>Enterobacteriaceae</taxon>
        <taxon>Shigella</taxon>
    </lineage>
</organism>
<reference key="1">
    <citation type="journal article" date="2005" name="Nucleic Acids Res.">
        <title>Genome dynamics and diversity of Shigella species, the etiologic agents of bacillary dysentery.</title>
        <authorList>
            <person name="Yang F."/>
            <person name="Yang J."/>
            <person name="Zhang X."/>
            <person name="Chen L."/>
            <person name="Jiang Y."/>
            <person name="Yan Y."/>
            <person name="Tang X."/>
            <person name="Wang J."/>
            <person name="Xiong Z."/>
            <person name="Dong J."/>
            <person name="Xue Y."/>
            <person name="Zhu Y."/>
            <person name="Xu X."/>
            <person name="Sun L."/>
            <person name="Chen S."/>
            <person name="Nie H."/>
            <person name="Peng J."/>
            <person name="Xu J."/>
            <person name="Wang Y."/>
            <person name="Yuan Z."/>
            <person name="Wen Y."/>
            <person name="Yao Z."/>
            <person name="Shen Y."/>
            <person name="Qiang B."/>
            <person name="Hou Y."/>
            <person name="Yu J."/>
            <person name="Jin Q."/>
        </authorList>
    </citation>
    <scope>NUCLEOTIDE SEQUENCE [LARGE SCALE GENOMIC DNA]</scope>
    <source>
        <strain>Sb227</strain>
    </source>
</reference>